<dbReference type="EMBL" id="BC097607">
    <property type="protein sequence ID" value="AAH97607.1"/>
    <property type="molecule type" value="mRNA"/>
</dbReference>
<dbReference type="RefSeq" id="NP_001090032.1">
    <property type="nucleotide sequence ID" value="NM_001096563.1"/>
</dbReference>
<dbReference type="SMR" id="Q4V817"/>
<dbReference type="DNASU" id="735105"/>
<dbReference type="GeneID" id="735105"/>
<dbReference type="KEGG" id="xla:735105"/>
<dbReference type="AGR" id="Xenbase:XB-GENE-981961"/>
<dbReference type="CTD" id="735105"/>
<dbReference type="OMA" id="QVDRDNY"/>
<dbReference type="OrthoDB" id="10033037at2759"/>
<dbReference type="Proteomes" id="UP000186698">
    <property type="component" value="Chromosome 3L"/>
</dbReference>
<dbReference type="Bgee" id="735105">
    <property type="expression patterns" value="Expressed in ovary and 19 other cell types or tissues"/>
</dbReference>
<dbReference type="InterPro" id="IPR018888">
    <property type="entry name" value="UPF0561"/>
</dbReference>
<dbReference type="PANTHER" id="PTHR34256">
    <property type="entry name" value="UPF0561 PROTEIN C2ORF68"/>
    <property type="match status" value="1"/>
</dbReference>
<dbReference type="PANTHER" id="PTHR34256:SF1">
    <property type="entry name" value="UPF0561 PROTEIN C2ORF68"/>
    <property type="match status" value="1"/>
</dbReference>
<dbReference type="Pfam" id="PF10573">
    <property type="entry name" value="UPF0561"/>
    <property type="match status" value="1"/>
</dbReference>
<evidence type="ECO:0000256" key="1">
    <source>
        <dbReference type="SAM" id="MobiDB-lite"/>
    </source>
</evidence>
<evidence type="ECO:0000305" key="2"/>
<feature type="chain" id="PRO_0000328788" description="UPF0561 protein C2orf68 homolog">
    <location>
        <begin position="1"/>
        <end position="151"/>
    </location>
</feature>
<feature type="region of interest" description="Disordered" evidence="1">
    <location>
        <begin position="1"/>
        <end position="89"/>
    </location>
</feature>
<feature type="compositionally biased region" description="Basic and acidic residues" evidence="1">
    <location>
        <begin position="32"/>
        <end position="46"/>
    </location>
</feature>
<feature type="compositionally biased region" description="Basic and acidic residues" evidence="1">
    <location>
        <begin position="70"/>
        <end position="85"/>
    </location>
</feature>
<sequence>MEEEGEAQGRAVPGGRLNMSHGFVHHIRRNQLARDDYDREVKQAKEKQKKRYTPGPTRQKKPDLQVYHPRQREKAHTTETLKDEPNDNGTQLFCLDFEADGGEVTSIIVYEDDDAEQLATMISNQNQLEGDMREALKQRIQEEISKRRVQR</sequence>
<reference key="1">
    <citation type="submission" date="2005-06" db="EMBL/GenBank/DDBJ databases">
        <authorList>
            <consortium name="NIH - Xenopus Gene Collection (XGC) project"/>
        </authorList>
    </citation>
    <scope>NUCLEOTIDE SEQUENCE [LARGE SCALE MRNA]</scope>
    <source>
        <tissue>Ovary</tissue>
    </source>
</reference>
<comment type="similarity">
    <text evidence="2">Belongs to the UPF0561 family.</text>
</comment>
<protein>
    <recommendedName>
        <fullName>UPF0561 protein C2orf68 homolog</fullName>
    </recommendedName>
</protein>
<keyword id="KW-1185">Reference proteome</keyword>
<organism>
    <name type="scientific">Xenopus laevis</name>
    <name type="common">African clawed frog</name>
    <dbReference type="NCBI Taxonomy" id="8355"/>
    <lineage>
        <taxon>Eukaryota</taxon>
        <taxon>Metazoa</taxon>
        <taxon>Chordata</taxon>
        <taxon>Craniata</taxon>
        <taxon>Vertebrata</taxon>
        <taxon>Euteleostomi</taxon>
        <taxon>Amphibia</taxon>
        <taxon>Batrachia</taxon>
        <taxon>Anura</taxon>
        <taxon>Pipoidea</taxon>
        <taxon>Pipidae</taxon>
        <taxon>Xenopodinae</taxon>
        <taxon>Xenopus</taxon>
        <taxon>Xenopus</taxon>
    </lineage>
</organism>
<name>CB068_XENLA</name>
<proteinExistence type="evidence at transcript level"/>
<accession>Q4V817</accession>